<feature type="signal peptide" evidence="1">
    <location>
        <begin position="1"/>
        <end position="23"/>
    </location>
</feature>
<feature type="chain" id="PRO_5000054386" description="Integrin beta-like protein 1">
    <location>
        <begin position="24"/>
        <end position="494"/>
    </location>
</feature>
<feature type="domain" description="I-EGF 1" evidence="2">
    <location>
        <begin position="40"/>
        <end position="90"/>
    </location>
</feature>
<feature type="repeat" description="I">
    <location>
        <begin position="51"/>
        <end position="95"/>
    </location>
</feature>
<feature type="domain" description="I-EGF 2" evidence="2">
    <location>
        <begin position="91"/>
        <end position="127"/>
    </location>
</feature>
<feature type="repeat" description="II">
    <location>
        <begin position="96"/>
        <end position="142"/>
    </location>
</feature>
<feature type="domain" description="I-EGF 3" evidence="2">
    <location>
        <begin position="132"/>
        <end position="179"/>
    </location>
</feature>
<feature type="repeat" description="III">
    <location>
        <begin position="143"/>
        <end position="184"/>
    </location>
</feature>
<feature type="domain" description="I-EGF 4" evidence="2">
    <location>
        <begin position="180"/>
        <end position="217"/>
    </location>
</feature>
<feature type="repeat" description="IV">
    <location>
        <begin position="185"/>
        <end position="230"/>
    </location>
</feature>
<feature type="domain" description="I-EGF 5" evidence="2">
    <location>
        <begin position="220"/>
        <end position="270"/>
    </location>
</feature>
<feature type="repeat" description="V">
    <location>
        <begin position="231"/>
        <end position="275"/>
    </location>
</feature>
<feature type="domain" description="I-EGF 6" evidence="2">
    <location>
        <begin position="271"/>
        <end position="311"/>
    </location>
</feature>
<feature type="repeat" description="VI">
    <location>
        <begin position="276"/>
        <end position="326"/>
    </location>
</feature>
<feature type="domain" description="I-EGF 7" evidence="2">
    <location>
        <begin position="316"/>
        <end position="362"/>
    </location>
</feature>
<feature type="repeat" description="VII">
    <location>
        <begin position="327"/>
        <end position="367"/>
    </location>
</feature>
<feature type="domain" description="I-EGF 8" evidence="2">
    <location>
        <begin position="363"/>
        <end position="399"/>
    </location>
</feature>
<feature type="repeat" description="VIII">
    <location>
        <begin position="368"/>
        <end position="414"/>
    </location>
</feature>
<feature type="domain" description="I-EGF 9" evidence="2">
    <location>
        <begin position="404"/>
        <end position="449"/>
    </location>
</feature>
<feature type="repeat" description="IX">
    <location>
        <begin position="415"/>
        <end position="454"/>
    </location>
</feature>
<feature type="domain" description="I-EGF 10" evidence="2">
    <location>
        <begin position="450"/>
        <end position="486"/>
    </location>
</feature>
<feature type="repeat" description="X">
    <location>
        <begin position="455"/>
        <end position="494"/>
    </location>
</feature>
<feature type="region of interest" description="Cysteine-rich tandem repeats">
    <location>
        <begin position="51"/>
        <end position="494"/>
    </location>
</feature>
<feature type="glycosylation site" description="N-linked (GlcNAc...) asparagine" evidence="1">
    <location>
        <position position="405"/>
    </location>
</feature>
<feature type="disulfide bond" evidence="2">
    <location>
        <begin position="40"/>
        <end position="71"/>
    </location>
</feature>
<feature type="disulfide bond" evidence="2">
    <location>
        <begin position="51"/>
        <end position="69"/>
    </location>
</feature>
<feature type="disulfide bond" evidence="2">
    <location>
        <begin position="63"/>
        <end position="74"/>
    </location>
</feature>
<feature type="disulfide bond" evidence="2">
    <location>
        <begin position="76"/>
        <end position="89"/>
    </location>
</feature>
<feature type="disulfide bond" evidence="2">
    <location>
        <begin position="91"/>
        <end position="112"/>
    </location>
</feature>
<feature type="disulfide bond" evidence="2">
    <location>
        <begin position="96"/>
        <end position="110"/>
    </location>
</feature>
<feature type="disulfide bond" evidence="2">
    <location>
        <begin position="104"/>
        <end position="115"/>
    </location>
</feature>
<feature type="disulfide bond" evidence="2">
    <location>
        <begin position="117"/>
        <end position="126"/>
    </location>
</feature>
<feature type="disulfide bond" evidence="2">
    <location>
        <begin position="132"/>
        <end position="159"/>
    </location>
</feature>
<feature type="disulfide bond" evidence="2">
    <location>
        <begin position="143"/>
        <end position="157"/>
    </location>
</feature>
<feature type="disulfide bond" evidence="2">
    <location>
        <begin position="151"/>
        <end position="162"/>
    </location>
</feature>
<feature type="disulfide bond" evidence="2">
    <location>
        <begin position="164"/>
        <end position="178"/>
    </location>
</feature>
<feature type="disulfide bond" evidence="2">
    <location>
        <begin position="180"/>
        <end position="202"/>
    </location>
</feature>
<feature type="disulfide bond" evidence="2">
    <location>
        <begin position="185"/>
        <end position="200"/>
    </location>
</feature>
<feature type="disulfide bond" evidence="2">
    <location>
        <begin position="194"/>
        <end position="205"/>
    </location>
</feature>
<feature type="disulfide bond" evidence="2">
    <location>
        <begin position="207"/>
        <end position="216"/>
    </location>
</feature>
<feature type="disulfide bond" evidence="2">
    <location>
        <begin position="220"/>
        <end position="247"/>
    </location>
</feature>
<feature type="disulfide bond" evidence="2">
    <location>
        <begin position="231"/>
        <end position="245"/>
    </location>
</feature>
<feature type="disulfide bond" evidence="2">
    <location>
        <begin position="239"/>
        <end position="250"/>
    </location>
</feature>
<feature type="disulfide bond" evidence="2">
    <location>
        <begin position="252"/>
        <end position="269"/>
    </location>
</feature>
<feature type="disulfide bond" evidence="2">
    <location>
        <begin position="271"/>
        <end position="296"/>
    </location>
</feature>
<feature type="disulfide bond" evidence="2">
    <location>
        <begin position="276"/>
        <end position="294"/>
    </location>
</feature>
<feature type="disulfide bond" evidence="2">
    <location>
        <begin position="288"/>
        <end position="299"/>
    </location>
</feature>
<feature type="disulfide bond" evidence="2">
    <location>
        <begin position="301"/>
        <end position="310"/>
    </location>
</feature>
<feature type="disulfide bond" evidence="2">
    <location>
        <begin position="316"/>
        <end position="343"/>
    </location>
</feature>
<feature type="disulfide bond" evidence="2">
    <location>
        <begin position="327"/>
        <end position="341"/>
    </location>
</feature>
<feature type="disulfide bond" evidence="2">
    <location>
        <begin position="335"/>
        <end position="346"/>
    </location>
</feature>
<feature type="disulfide bond" evidence="2">
    <location>
        <begin position="348"/>
        <end position="361"/>
    </location>
</feature>
<feature type="disulfide bond" evidence="2">
    <location>
        <begin position="363"/>
        <end position="384"/>
    </location>
</feature>
<feature type="disulfide bond" evidence="2">
    <location>
        <begin position="368"/>
        <end position="382"/>
    </location>
</feature>
<feature type="disulfide bond" evidence="2">
    <location>
        <begin position="376"/>
        <end position="387"/>
    </location>
</feature>
<feature type="disulfide bond" evidence="2">
    <location>
        <begin position="389"/>
        <end position="398"/>
    </location>
</feature>
<feature type="disulfide bond" evidence="2">
    <location>
        <begin position="404"/>
        <end position="431"/>
    </location>
</feature>
<feature type="disulfide bond" evidence="2">
    <location>
        <begin position="415"/>
        <end position="429"/>
    </location>
</feature>
<feature type="disulfide bond" evidence="2">
    <location>
        <begin position="423"/>
        <end position="434"/>
    </location>
</feature>
<feature type="disulfide bond" evidence="2">
    <location>
        <begin position="436"/>
        <end position="448"/>
    </location>
</feature>
<feature type="disulfide bond" evidence="2">
    <location>
        <begin position="450"/>
        <end position="471"/>
    </location>
</feature>
<feature type="disulfide bond" evidence="2">
    <location>
        <begin position="455"/>
        <end position="469"/>
    </location>
</feature>
<feature type="disulfide bond" evidence="2">
    <location>
        <begin position="463"/>
        <end position="474"/>
    </location>
</feature>
<feature type="disulfide bond" evidence="2">
    <location>
        <begin position="476"/>
        <end position="485"/>
    </location>
</feature>
<feature type="splice variant" id="VSP_054799" description="In isoform 2." evidence="4">
    <location>
        <begin position="1"/>
        <end position="141"/>
    </location>
</feature>
<feature type="splice variant" id="VSP_054800" description="In isoform 3." evidence="4">
    <original>MRPPGFRNFLLLASSLLFAGLSAVPQSFSPSLRSWPGAACRLSRAESERRCRAPGQPPGAALCHGRGRCDCGVCICHVTEPGMFFGPLCECHEWVCETYDGSTCA</original>
    <variation>MNLVAVMGAFNK</variation>
    <location>
        <begin position="1"/>
        <end position="105"/>
    </location>
</feature>
<feature type="sequence variant" id="VAR_039542" description="In dbSNP:rs1140605.">
    <original>A</original>
    <variation>S</variation>
    <location>
        <position position="154"/>
    </location>
</feature>
<feature type="sequence conflict" description="In Ref. 2; BAF84029." evidence="5" ref="2">
    <original>P</original>
    <variation>S</variation>
    <location>
        <position position="3"/>
    </location>
</feature>
<feature type="sequence conflict" description="In Ref. 2; BAF84029." evidence="5" ref="2">
    <original>R</original>
    <variation>G</variation>
    <location>
        <position position="453"/>
    </location>
</feature>
<sequence>MRPPGFRNFLLLASSLLFAGLSAVPQSFSPSLRSWPGAACRLSRAESERRCRAPGQPPGAALCHGRGRCDCGVCICHVTEPGMFFGPLCECHEWVCETYDGSTCAGHGKCDCGKCKCDQGWYGDACQYPTNCDLTKKKSNQMCKNSQDIICSNAGTCHCGRCKCDNSDGSGLVYGKFCECDDRECIDDETEEICGGHGKCYCGNCYCKAGWHGDKCEFQCDITPWESKRRCTSPDGKICSNRGTCVCGECTCHDVDPTGDWGDIHGDTCECDERDCRAVYDRYSDDFCSGHGQCNCGRCDCKAGWYGKKCEHPQSCTLSAEESIRKCQGSSDLPCSGRGKCECGKCTCYPPGDRRVYGKTCECDDRRCEDLDGVVCGGHGTCSCGRCVCERGWFGKLCQHPRKCNMTEEQSKNLCESADGILCSGKGSCHCGKCICSAEEWYISGEFCDCDDRDCDKHDGLICTGNGICSCGNCECWDGWNGNACEIWLGSEYP</sequence>
<reference key="1">
    <citation type="journal article" date="1999" name="Genomics">
        <title>Cloning and characterization of a novel beta integrin-related cDNA coding for the protein TIED ('ten beta integrin EGF-like repeat domains') that maps to chromosome band 13q33: a divergent stand-alone integrin stalk structure.</title>
        <authorList>
            <person name="Berg R.W."/>
            <person name="Leung E."/>
            <person name="Gough S."/>
            <person name="Morris C."/>
            <person name="Yao W.P."/>
            <person name="Wang S.X."/>
            <person name="Ni J."/>
            <person name="Krissansen G.W."/>
        </authorList>
    </citation>
    <scope>NUCLEOTIDE SEQUENCE [MRNA] (ISOFORM 1)</scope>
    <scope>TISSUE SPECIFICITY</scope>
    <source>
        <tissue>Umbilical vein</tissue>
    </source>
</reference>
<reference key="2">
    <citation type="journal article" date="2004" name="Nat. Genet.">
        <title>Complete sequencing and characterization of 21,243 full-length human cDNAs.</title>
        <authorList>
            <person name="Ota T."/>
            <person name="Suzuki Y."/>
            <person name="Nishikawa T."/>
            <person name="Otsuki T."/>
            <person name="Sugiyama T."/>
            <person name="Irie R."/>
            <person name="Wakamatsu A."/>
            <person name="Hayashi K."/>
            <person name="Sato H."/>
            <person name="Nagai K."/>
            <person name="Kimura K."/>
            <person name="Makita H."/>
            <person name="Sekine M."/>
            <person name="Obayashi M."/>
            <person name="Nishi T."/>
            <person name="Shibahara T."/>
            <person name="Tanaka T."/>
            <person name="Ishii S."/>
            <person name="Yamamoto J."/>
            <person name="Saito K."/>
            <person name="Kawai Y."/>
            <person name="Isono Y."/>
            <person name="Nakamura Y."/>
            <person name="Nagahari K."/>
            <person name="Murakami K."/>
            <person name="Yasuda T."/>
            <person name="Iwayanagi T."/>
            <person name="Wagatsuma M."/>
            <person name="Shiratori A."/>
            <person name="Sudo H."/>
            <person name="Hosoiri T."/>
            <person name="Kaku Y."/>
            <person name="Kodaira H."/>
            <person name="Kondo H."/>
            <person name="Sugawara M."/>
            <person name="Takahashi M."/>
            <person name="Kanda K."/>
            <person name="Yokoi T."/>
            <person name="Furuya T."/>
            <person name="Kikkawa E."/>
            <person name="Omura Y."/>
            <person name="Abe K."/>
            <person name="Kamihara K."/>
            <person name="Katsuta N."/>
            <person name="Sato K."/>
            <person name="Tanikawa M."/>
            <person name="Yamazaki M."/>
            <person name="Ninomiya K."/>
            <person name="Ishibashi T."/>
            <person name="Yamashita H."/>
            <person name="Murakawa K."/>
            <person name="Fujimori K."/>
            <person name="Tanai H."/>
            <person name="Kimata M."/>
            <person name="Watanabe M."/>
            <person name="Hiraoka S."/>
            <person name="Chiba Y."/>
            <person name="Ishida S."/>
            <person name="Ono Y."/>
            <person name="Takiguchi S."/>
            <person name="Watanabe S."/>
            <person name="Yosida M."/>
            <person name="Hotuta T."/>
            <person name="Kusano J."/>
            <person name="Kanehori K."/>
            <person name="Takahashi-Fujii A."/>
            <person name="Hara H."/>
            <person name="Tanase T.-O."/>
            <person name="Nomura Y."/>
            <person name="Togiya S."/>
            <person name="Komai F."/>
            <person name="Hara R."/>
            <person name="Takeuchi K."/>
            <person name="Arita M."/>
            <person name="Imose N."/>
            <person name="Musashino K."/>
            <person name="Yuuki H."/>
            <person name="Oshima A."/>
            <person name="Sasaki N."/>
            <person name="Aotsuka S."/>
            <person name="Yoshikawa Y."/>
            <person name="Matsunawa H."/>
            <person name="Ichihara T."/>
            <person name="Shiohata N."/>
            <person name="Sano S."/>
            <person name="Moriya S."/>
            <person name="Momiyama H."/>
            <person name="Satoh N."/>
            <person name="Takami S."/>
            <person name="Terashima Y."/>
            <person name="Suzuki O."/>
            <person name="Nakagawa S."/>
            <person name="Senoh A."/>
            <person name="Mizoguchi H."/>
            <person name="Goto Y."/>
            <person name="Shimizu F."/>
            <person name="Wakebe H."/>
            <person name="Hishigaki H."/>
            <person name="Watanabe T."/>
            <person name="Sugiyama A."/>
            <person name="Takemoto M."/>
            <person name="Kawakami B."/>
            <person name="Yamazaki M."/>
            <person name="Watanabe K."/>
            <person name="Kumagai A."/>
            <person name="Itakura S."/>
            <person name="Fukuzumi Y."/>
            <person name="Fujimori Y."/>
            <person name="Komiyama M."/>
            <person name="Tashiro H."/>
            <person name="Tanigami A."/>
            <person name="Fujiwara T."/>
            <person name="Ono T."/>
            <person name="Yamada K."/>
            <person name="Fujii Y."/>
            <person name="Ozaki K."/>
            <person name="Hirao M."/>
            <person name="Ohmori Y."/>
            <person name="Kawabata A."/>
            <person name="Hikiji T."/>
            <person name="Kobatake N."/>
            <person name="Inagaki H."/>
            <person name="Ikema Y."/>
            <person name="Okamoto S."/>
            <person name="Okitani R."/>
            <person name="Kawakami T."/>
            <person name="Noguchi S."/>
            <person name="Itoh T."/>
            <person name="Shigeta K."/>
            <person name="Senba T."/>
            <person name="Matsumura K."/>
            <person name="Nakajima Y."/>
            <person name="Mizuno T."/>
            <person name="Morinaga M."/>
            <person name="Sasaki M."/>
            <person name="Togashi T."/>
            <person name="Oyama M."/>
            <person name="Hata H."/>
            <person name="Watanabe M."/>
            <person name="Komatsu T."/>
            <person name="Mizushima-Sugano J."/>
            <person name="Satoh T."/>
            <person name="Shirai Y."/>
            <person name="Takahashi Y."/>
            <person name="Nakagawa K."/>
            <person name="Okumura K."/>
            <person name="Nagase T."/>
            <person name="Nomura N."/>
            <person name="Kikuchi H."/>
            <person name="Masuho Y."/>
            <person name="Yamashita R."/>
            <person name="Nakai K."/>
            <person name="Yada T."/>
            <person name="Nakamura Y."/>
            <person name="Ohara O."/>
            <person name="Isogai T."/>
            <person name="Sugano S."/>
        </authorList>
    </citation>
    <scope>NUCLEOTIDE SEQUENCE [LARGE SCALE MRNA] (ISOFORMS 1; 2 AND 3)</scope>
    <source>
        <tissue>Tongue</tissue>
    </source>
</reference>
<reference key="3">
    <citation type="journal article" date="2002" name="Proc. Natl. Acad. Sci. U.S.A.">
        <title>Genetic and physiological data implicating the new human gene G72 and the gene for D-amino acid oxidase in schizophrenia.</title>
        <authorList>
            <person name="Chumakov I."/>
            <person name="Blumenfeld M."/>
            <person name="Guerassimenko O."/>
            <person name="Cavarec L."/>
            <person name="Palicio M."/>
            <person name="Abderrahim H."/>
            <person name="Bougueleret L."/>
            <person name="Barry C."/>
            <person name="Tanaka H."/>
            <person name="La Rosa P."/>
            <person name="Puech A."/>
            <person name="Tahri N."/>
            <person name="Cohen-Akenine A."/>
            <person name="Delabrosse S."/>
            <person name="Lissarrague S."/>
            <person name="Picard F.-P."/>
            <person name="Maurice K."/>
            <person name="Essioux L."/>
            <person name="Millasseau P."/>
            <person name="Grel P."/>
            <person name="Debailleul V."/>
            <person name="Simon A.-M."/>
            <person name="Caterina D."/>
            <person name="Dufaure I."/>
            <person name="Malekzadeh K."/>
            <person name="Belova M."/>
            <person name="Luan J.-J."/>
            <person name="Bouillot M."/>
            <person name="Sambucy J.-L."/>
            <person name="Primas G."/>
            <person name="Saumier M."/>
            <person name="Boubkiri N."/>
            <person name="Martin-Saumier S."/>
            <person name="Nasroune M."/>
            <person name="Peixoto H."/>
            <person name="Delaye A."/>
            <person name="Pinchot V."/>
            <person name="Bastucci M."/>
            <person name="Guillou S."/>
            <person name="Chevillon M."/>
            <person name="Sainz-Fuertes R."/>
            <person name="Meguenni S."/>
            <person name="Aurich-Costa J."/>
            <person name="Cherif D."/>
            <person name="Gimalac A."/>
            <person name="Van Duijn C."/>
            <person name="Gauvreau D."/>
            <person name="Ouellette G."/>
            <person name="Fortier I."/>
            <person name="Raelson J."/>
            <person name="Sherbatich T."/>
            <person name="Riazanskay N."/>
            <person name="Rogaev E."/>
            <person name="Raeymaekers P."/>
            <person name="Aerssens J."/>
            <person name="Konings F."/>
            <person name="Luyten W."/>
            <person name="Macciardi F."/>
            <person name="Sham P.C."/>
            <person name="Straub R.E."/>
            <person name="Weinberger D.R."/>
            <person name="Cohen N."/>
            <person name="Cohen D."/>
        </authorList>
    </citation>
    <scope>NUCLEOTIDE SEQUENCE [GENOMIC DNA]</scope>
</reference>
<reference key="4">
    <citation type="journal article" date="2004" name="Nature">
        <title>The DNA sequence and analysis of human chromosome 13.</title>
        <authorList>
            <person name="Dunham A."/>
            <person name="Matthews L.H."/>
            <person name="Burton J."/>
            <person name="Ashurst J.L."/>
            <person name="Howe K.L."/>
            <person name="Ashcroft K.J."/>
            <person name="Beare D.M."/>
            <person name="Burford D.C."/>
            <person name="Hunt S.E."/>
            <person name="Griffiths-Jones S."/>
            <person name="Jones M.C."/>
            <person name="Keenan S.J."/>
            <person name="Oliver K."/>
            <person name="Scott C.E."/>
            <person name="Ainscough R."/>
            <person name="Almeida J.P."/>
            <person name="Ambrose K.D."/>
            <person name="Andrews D.T."/>
            <person name="Ashwell R.I.S."/>
            <person name="Babbage A.K."/>
            <person name="Bagguley C.L."/>
            <person name="Bailey J."/>
            <person name="Bannerjee R."/>
            <person name="Barlow K.F."/>
            <person name="Bates K."/>
            <person name="Beasley H."/>
            <person name="Bird C.P."/>
            <person name="Bray-Allen S."/>
            <person name="Brown A.J."/>
            <person name="Brown J.Y."/>
            <person name="Burrill W."/>
            <person name="Carder C."/>
            <person name="Carter N.P."/>
            <person name="Chapman J.C."/>
            <person name="Clamp M.E."/>
            <person name="Clark S.Y."/>
            <person name="Clarke G."/>
            <person name="Clee C.M."/>
            <person name="Clegg S.C."/>
            <person name="Cobley V."/>
            <person name="Collins J.E."/>
            <person name="Corby N."/>
            <person name="Coville G.J."/>
            <person name="Deloukas P."/>
            <person name="Dhami P."/>
            <person name="Dunham I."/>
            <person name="Dunn M."/>
            <person name="Earthrowl M.E."/>
            <person name="Ellington A.G."/>
            <person name="Faulkner L."/>
            <person name="Frankish A.G."/>
            <person name="Frankland J."/>
            <person name="French L."/>
            <person name="Garner P."/>
            <person name="Garnett J."/>
            <person name="Gilbert J.G.R."/>
            <person name="Gilson C.J."/>
            <person name="Ghori J."/>
            <person name="Grafham D.V."/>
            <person name="Gribble S.M."/>
            <person name="Griffiths C."/>
            <person name="Hall R.E."/>
            <person name="Hammond S."/>
            <person name="Harley J.L."/>
            <person name="Hart E.A."/>
            <person name="Heath P.D."/>
            <person name="Howden P.J."/>
            <person name="Huckle E.J."/>
            <person name="Hunt P.J."/>
            <person name="Hunt A.R."/>
            <person name="Johnson C."/>
            <person name="Johnson D."/>
            <person name="Kay M."/>
            <person name="Kimberley A.M."/>
            <person name="King A."/>
            <person name="Laird G.K."/>
            <person name="Langford C.J."/>
            <person name="Lawlor S."/>
            <person name="Leongamornlert D.A."/>
            <person name="Lloyd D.M."/>
            <person name="Lloyd C."/>
            <person name="Loveland J.E."/>
            <person name="Lovell J."/>
            <person name="Martin S."/>
            <person name="Mashreghi-Mohammadi M."/>
            <person name="McLaren S.J."/>
            <person name="McMurray A."/>
            <person name="Milne S."/>
            <person name="Moore M.J.F."/>
            <person name="Nickerson T."/>
            <person name="Palmer S.A."/>
            <person name="Pearce A.V."/>
            <person name="Peck A.I."/>
            <person name="Pelan S."/>
            <person name="Phillimore B."/>
            <person name="Porter K.M."/>
            <person name="Rice C.M."/>
            <person name="Searle S."/>
            <person name="Sehra H.K."/>
            <person name="Shownkeen R."/>
            <person name="Skuce C.D."/>
            <person name="Smith M."/>
            <person name="Steward C.A."/>
            <person name="Sycamore N."/>
            <person name="Tester J."/>
            <person name="Thomas D.W."/>
            <person name="Tracey A."/>
            <person name="Tromans A."/>
            <person name="Tubby B."/>
            <person name="Wall M."/>
            <person name="Wallis J.M."/>
            <person name="West A.P."/>
            <person name="Whitehead S.L."/>
            <person name="Willey D.L."/>
            <person name="Wilming L."/>
            <person name="Wray P.W."/>
            <person name="Wright M.W."/>
            <person name="Young L."/>
            <person name="Coulson A."/>
            <person name="Durbin R.M."/>
            <person name="Hubbard T."/>
            <person name="Sulston J.E."/>
            <person name="Beck S."/>
            <person name="Bentley D.R."/>
            <person name="Rogers J."/>
            <person name="Ross M.T."/>
        </authorList>
    </citation>
    <scope>NUCLEOTIDE SEQUENCE [LARGE SCALE GENOMIC DNA]</scope>
</reference>
<reference key="5">
    <citation type="submission" date="2005-07" db="EMBL/GenBank/DDBJ databases">
        <authorList>
            <person name="Mural R.J."/>
            <person name="Istrail S."/>
            <person name="Sutton G.G."/>
            <person name="Florea L."/>
            <person name="Halpern A.L."/>
            <person name="Mobarry C.M."/>
            <person name="Lippert R."/>
            <person name="Walenz B."/>
            <person name="Shatkay H."/>
            <person name="Dew I."/>
            <person name="Miller J.R."/>
            <person name="Flanigan M.J."/>
            <person name="Edwards N.J."/>
            <person name="Bolanos R."/>
            <person name="Fasulo D."/>
            <person name="Halldorsson B.V."/>
            <person name="Hannenhalli S."/>
            <person name="Turner R."/>
            <person name="Yooseph S."/>
            <person name="Lu F."/>
            <person name="Nusskern D.R."/>
            <person name="Shue B.C."/>
            <person name="Zheng X.H."/>
            <person name="Zhong F."/>
            <person name="Delcher A.L."/>
            <person name="Huson D.H."/>
            <person name="Kravitz S.A."/>
            <person name="Mouchard L."/>
            <person name="Reinert K."/>
            <person name="Remington K.A."/>
            <person name="Clark A.G."/>
            <person name="Waterman M.S."/>
            <person name="Eichler E.E."/>
            <person name="Adams M.D."/>
            <person name="Hunkapiller M.W."/>
            <person name="Myers E.W."/>
            <person name="Venter J.C."/>
        </authorList>
    </citation>
    <scope>NUCLEOTIDE SEQUENCE [LARGE SCALE GENOMIC DNA]</scope>
</reference>
<reference key="6">
    <citation type="journal article" date="2004" name="Genome Res.">
        <title>The status, quality, and expansion of the NIH full-length cDNA project: the Mammalian Gene Collection (MGC).</title>
        <authorList>
            <consortium name="The MGC Project Team"/>
        </authorList>
    </citation>
    <scope>NUCLEOTIDE SEQUENCE [LARGE SCALE MRNA] (ISOFORM 1)</scope>
    <source>
        <tissue>Brain</tissue>
    </source>
</reference>
<reference key="7">
    <citation type="submission" date="2000-06" db="EMBL/GenBank/DDBJ databases">
        <authorList>
            <consortium name="The European IMAGE consortium"/>
        </authorList>
    </citation>
    <scope>NUCLEOTIDE SEQUENCE [LARGE SCALE MRNA] OF 383-494</scope>
</reference>
<name>ITGBL_HUMAN</name>
<comment type="subcellular location">
    <subcellularLocation>
        <location evidence="5">Secreted</location>
    </subcellularLocation>
</comment>
<comment type="alternative products">
    <event type="alternative splicing"/>
    <isoform>
        <id>O95965-1</id>
        <name>1</name>
        <sequence type="displayed"/>
    </isoform>
    <isoform>
        <id>O95965-2</id>
        <name>2</name>
        <sequence type="described" ref="VSP_054799"/>
    </isoform>
    <isoform>
        <id>O95965-3</id>
        <name>3</name>
        <sequence type="described" ref="VSP_054800"/>
    </isoform>
</comment>
<comment type="tissue specificity">
    <text evidence="3">Widely expressed in many tissues, but readily detectable only in aorta.</text>
</comment>
<comment type="domain">
    <text>Contains ten tandem EGF-like repeats strikingly similar to those found in the cysteine rich 'stalk-like' structure of integrin beta-subunits.</text>
</comment>
<dbReference type="EMBL" id="AF072752">
    <property type="protein sequence ID" value="AAD17666.1"/>
    <property type="molecule type" value="mRNA"/>
</dbReference>
<dbReference type="EMBL" id="AK095875">
    <property type="protein sequence ID" value="BAG53153.1"/>
    <property type="molecule type" value="mRNA"/>
</dbReference>
<dbReference type="EMBL" id="AK291340">
    <property type="protein sequence ID" value="BAF84029.1"/>
    <property type="molecule type" value="mRNA"/>
</dbReference>
<dbReference type="EMBL" id="AK298571">
    <property type="protein sequence ID" value="BAG60764.1"/>
    <property type="molecule type" value="mRNA"/>
</dbReference>
<dbReference type="EMBL" id="AE014293">
    <property type="protein sequence ID" value="AAN16024.1"/>
    <property type="molecule type" value="Genomic_DNA"/>
</dbReference>
<dbReference type="EMBL" id="AL139800">
    <property type="status" value="NOT_ANNOTATED_CDS"/>
    <property type="molecule type" value="Genomic_DNA"/>
</dbReference>
<dbReference type="EMBL" id="AL160153">
    <property type="status" value="NOT_ANNOTATED_CDS"/>
    <property type="molecule type" value="Genomic_DNA"/>
</dbReference>
<dbReference type="EMBL" id="AL355807">
    <property type="status" value="NOT_ANNOTATED_CDS"/>
    <property type="molecule type" value="Genomic_DNA"/>
</dbReference>
<dbReference type="EMBL" id="CH471085">
    <property type="protein sequence ID" value="EAX09052.1"/>
    <property type="molecule type" value="Genomic_DNA"/>
</dbReference>
<dbReference type="EMBL" id="BC036788">
    <property type="protein sequence ID" value="AAH36788.2"/>
    <property type="molecule type" value="mRNA"/>
</dbReference>
<dbReference type="EMBL" id="AL359052">
    <property type="protein sequence ID" value="CAB94388.1"/>
    <property type="molecule type" value="mRNA"/>
</dbReference>
<dbReference type="CCDS" id="CCDS61361.1">
    <molecule id="O95965-3"/>
</dbReference>
<dbReference type="CCDS" id="CCDS61362.1">
    <molecule id="O95965-2"/>
</dbReference>
<dbReference type="CCDS" id="CCDS9499.1">
    <molecule id="O95965-1"/>
</dbReference>
<dbReference type="RefSeq" id="NP_001258683.1">
    <molecule id="O95965-2"/>
    <property type="nucleotide sequence ID" value="NM_001271754.2"/>
</dbReference>
<dbReference type="RefSeq" id="NP_001258684.1">
    <property type="nucleotide sequence ID" value="NM_001271755.1"/>
</dbReference>
<dbReference type="RefSeq" id="NP_001258685.1">
    <molecule id="O95965-3"/>
    <property type="nucleotide sequence ID" value="NM_001271756.2"/>
</dbReference>
<dbReference type="RefSeq" id="NP_004782.1">
    <molecule id="O95965-1"/>
    <property type="nucleotide sequence ID" value="NM_004791.3"/>
</dbReference>
<dbReference type="RefSeq" id="XP_005254157.1">
    <property type="nucleotide sequence ID" value="XM_005254100.4"/>
</dbReference>
<dbReference type="BioGRID" id="114760">
    <property type="interactions" value="2"/>
</dbReference>
<dbReference type="FunCoup" id="O95965">
    <property type="interactions" value="34"/>
</dbReference>
<dbReference type="IntAct" id="O95965">
    <property type="interactions" value="1"/>
</dbReference>
<dbReference type="MINT" id="O95965"/>
<dbReference type="STRING" id="9606.ENSP00000365351"/>
<dbReference type="TCDB" id="9.B.87.1.25">
    <property type="family name" value="the selenoprotein p receptor (selp-receptor) family"/>
</dbReference>
<dbReference type="GlyCosmos" id="O95965">
    <property type="glycosylation" value="1 site, No reported glycans"/>
</dbReference>
<dbReference type="GlyGen" id="O95965">
    <property type="glycosylation" value="1 site"/>
</dbReference>
<dbReference type="iPTMnet" id="O95965"/>
<dbReference type="PhosphoSitePlus" id="O95965"/>
<dbReference type="BioMuta" id="ITGBL1"/>
<dbReference type="jPOST" id="O95965"/>
<dbReference type="MassIVE" id="O95965"/>
<dbReference type="PaxDb" id="9606-ENSP00000365351"/>
<dbReference type="PeptideAtlas" id="O95965"/>
<dbReference type="ProteomicsDB" id="3685"/>
<dbReference type="ProteomicsDB" id="4831"/>
<dbReference type="ProteomicsDB" id="51147">
    <molecule id="O95965-1"/>
</dbReference>
<dbReference type="TopDownProteomics" id="O95965-1">
    <molecule id="O95965-1"/>
</dbReference>
<dbReference type="Antibodypedia" id="1503">
    <property type="antibodies" value="96 antibodies from 22 providers"/>
</dbReference>
<dbReference type="DNASU" id="9358"/>
<dbReference type="Ensembl" id="ENST00000376162.7">
    <molecule id="O95965-3"/>
    <property type="protein sequence ID" value="ENSP00000365332.3"/>
    <property type="gene ID" value="ENSG00000198542.15"/>
</dbReference>
<dbReference type="Ensembl" id="ENST00000376180.8">
    <molecule id="O95965-1"/>
    <property type="protein sequence ID" value="ENSP00000365351.3"/>
    <property type="gene ID" value="ENSG00000198542.15"/>
</dbReference>
<dbReference type="Ensembl" id="ENST00000545560.6">
    <molecule id="O95965-2"/>
    <property type="protein sequence ID" value="ENSP00000439903.1"/>
    <property type="gene ID" value="ENSG00000198542.15"/>
</dbReference>
<dbReference type="GeneID" id="9358"/>
<dbReference type="KEGG" id="hsa:9358"/>
<dbReference type="MANE-Select" id="ENST00000376180.8">
    <property type="protein sequence ID" value="ENSP00000365351.3"/>
    <property type="RefSeq nucleotide sequence ID" value="NM_004791.3"/>
    <property type="RefSeq protein sequence ID" value="NP_004782.1"/>
</dbReference>
<dbReference type="UCSC" id="uc001vpb.5">
    <molecule id="O95965-1"/>
    <property type="organism name" value="human"/>
</dbReference>
<dbReference type="AGR" id="HGNC:6164"/>
<dbReference type="CTD" id="9358"/>
<dbReference type="DisGeNET" id="9358"/>
<dbReference type="GeneCards" id="ITGBL1"/>
<dbReference type="HGNC" id="HGNC:6164">
    <property type="gene designation" value="ITGBL1"/>
</dbReference>
<dbReference type="HPA" id="ENSG00000198542">
    <property type="expression patterns" value="Low tissue specificity"/>
</dbReference>
<dbReference type="MIM" id="604234">
    <property type="type" value="gene"/>
</dbReference>
<dbReference type="neXtProt" id="NX_O95965"/>
<dbReference type="OpenTargets" id="ENSG00000198542"/>
<dbReference type="PharmGKB" id="PA29963"/>
<dbReference type="VEuPathDB" id="HostDB:ENSG00000198542"/>
<dbReference type="eggNOG" id="KOG1226">
    <property type="taxonomic scope" value="Eukaryota"/>
</dbReference>
<dbReference type="GeneTree" id="ENSGT01110000267169"/>
<dbReference type="HOGENOM" id="CLU_043045_0_0_1"/>
<dbReference type="InParanoid" id="O95965"/>
<dbReference type="OMA" id="CGNDCKK"/>
<dbReference type="OrthoDB" id="9930377at2759"/>
<dbReference type="PAN-GO" id="O95965">
    <property type="GO annotations" value="8 GO annotations based on evolutionary models"/>
</dbReference>
<dbReference type="PhylomeDB" id="O95965"/>
<dbReference type="TreeFam" id="TF332636"/>
<dbReference type="PathwayCommons" id="O95965"/>
<dbReference type="Reactome" id="R-HSA-8941332">
    <property type="pathway name" value="RUNX2 regulates genes involved in cell migration"/>
</dbReference>
<dbReference type="SignaLink" id="O95965"/>
<dbReference type="BioGRID-ORCS" id="9358">
    <property type="hits" value="7 hits in 1149 CRISPR screens"/>
</dbReference>
<dbReference type="ChiTaRS" id="ITGBL1">
    <property type="organism name" value="human"/>
</dbReference>
<dbReference type="GenomeRNAi" id="9358"/>
<dbReference type="Pharos" id="O95965">
    <property type="development level" value="Tbio"/>
</dbReference>
<dbReference type="PRO" id="PR:O95965"/>
<dbReference type="Proteomes" id="UP000005640">
    <property type="component" value="Chromosome 13"/>
</dbReference>
<dbReference type="RNAct" id="O95965">
    <property type="molecule type" value="protein"/>
</dbReference>
<dbReference type="Bgee" id="ENSG00000198542">
    <property type="expression patterns" value="Expressed in frontal pole and 168 other cell types or tissues"/>
</dbReference>
<dbReference type="ExpressionAtlas" id="O95965">
    <property type="expression patterns" value="baseline and differential"/>
</dbReference>
<dbReference type="GO" id="GO:0009986">
    <property type="term" value="C:cell surface"/>
    <property type="evidence" value="ECO:0000318"/>
    <property type="project" value="GO_Central"/>
</dbReference>
<dbReference type="GO" id="GO:0005576">
    <property type="term" value="C:extracellular region"/>
    <property type="evidence" value="ECO:0007669"/>
    <property type="project" value="UniProtKB-SubCell"/>
</dbReference>
<dbReference type="GO" id="GO:0005925">
    <property type="term" value="C:focal adhesion"/>
    <property type="evidence" value="ECO:0000318"/>
    <property type="project" value="GO_Central"/>
</dbReference>
<dbReference type="GO" id="GO:0008305">
    <property type="term" value="C:integrin complex"/>
    <property type="evidence" value="ECO:0000318"/>
    <property type="project" value="GO_Central"/>
</dbReference>
<dbReference type="GO" id="GO:0005886">
    <property type="term" value="C:plasma membrane"/>
    <property type="evidence" value="ECO:0000304"/>
    <property type="project" value="Reactome"/>
</dbReference>
<dbReference type="GO" id="GO:0005178">
    <property type="term" value="F:integrin binding"/>
    <property type="evidence" value="ECO:0000318"/>
    <property type="project" value="GO_Central"/>
</dbReference>
<dbReference type="GO" id="GO:0007155">
    <property type="term" value="P:cell adhesion"/>
    <property type="evidence" value="ECO:0000304"/>
    <property type="project" value="ProtInc"/>
</dbReference>
<dbReference type="GO" id="GO:0033627">
    <property type="term" value="P:cell adhesion mediated by integrin"/>
    <property type="evidence" value="ECO:0000318"/>
    <property type="project" value="GO_Central"/>
</dbReference>
<dbReference type="GO" id="GO:0016477">
    <property type="term" value="P:cell migration"/>
    <property type="evidence" value="ECO:0000318"/>
    <property type="project" value="GO_Central"/>
</dbReference>
<dbReference type="GO" id="GO:0098609">
    <property type="term" value="P:cell-cell adhesion"/>
    <property type="evidence" value="ECO:0000318"/>
    <property type="project" value="GO_Central"/>
</dbReference>
<dbReference type="GO" id="GO:0007160">
    <property type="term" value="P:cell-matrix adhesion"/>
    <property type="evidence" value="ECO:0000318"/>
    <property type="project" value="GO_Central"/>
</dbReference>
<dbReference type="GO" id="GO:0007229">
    <property type="term" value="P:integrin-mediated signaling pathway"/>
    <property type="evidence" value="ECO:0000318"/>
    <property type="project" value="GO_Central"/>
</dbReference>
<dbReference type="FunFam" id="2.10.25.10:FF:000249">
    <property type="entry name" value="Integrin subunit beta like 1"/>
    <property type="match status" value="1"/>
</dbReference>
<dbReference type="FunFam" id="2.10.25.10:FF:000374">
    <property type="entry name" value="Integrin subunit beta like 1"/>
    <property type="match status" value="1"/>
</dbReference>
<dbReference type="FunFam" id="2.10.25.10:FF:000384">
    <property type="entry name" value="Integrin subunit beta like 1"/>
    <property type="match status" value="1"/>
</dbReference>
<dbReference type="FunFam" id="2.10.25.10:FF:000450">
    <property type="entry name" value="Integrin subunit beta like 1"/>
    <property type="match status" value="1"/>
</dbReference>
<dbReference type="FunFam" id="2.10.25.10:FF:000481">
    <property type="entry name" value="Integrin subunit beta like 1"/>
    <property type="match status" value="1"/>
</dbReference>
<dbReference type="FunFam" id="2.10.25.10:FF:000042">
    <property type="entry name" value="Integrin subunit beta-like 1"/>
    <property type="match status" value="4"/>
</dbReference>
<dbReference type="FunFam" id="2.10.25.10:FF:000175">
    <property type="entry name" value="Integrin subunit beta-like 1"/>
    <property type="match status" value="1"/>
</dbReference>
<dbReference type="Gene3D" id="2.10.25.10">
    <property type="entry name" value="Laminin"/>
    <property type="match status" value="10"/>
</dbReference>
<dbReference type="InterPro" id="IPR000742">
    <property type="entry name" value="EGF-like_dom"/>
</dbReference>
<dbReference type="InterPro" id="IPR013111">
    <property type="entry name" value="EGF_extracell"/>
</dbReference>
<dbReference type="InterPro" id="IPR015812">
    <property type="entry name" value="Integrin_bsu"/>
</dbReference>
<dbReference type="PANTHER" id="PTHR10082">
    <property type="entry name" value="INTEGRIN BETA SUBUNIT"/>
    <property type="match status" value="1"/>
</dbReference>
<dbReference type="PANTHER" id="PTHR10082:SF60">
    <property type="entry name" value="INTEGRIN BETA-PS"/>
    <property type="match status" value="1"/>
</dbReference>
<dbReference type="Pfam" id="PF07974">
    <property type="entry name" value="EGF_2"/>
    <property type="match status" value="5"/>
</dbReference>
<dbReference type="Pfam" id="PF23105">
    <property type="entry name" value="EGF_integrin"/>
    <property type="match status" value="2"/>
</dbReference>
<dbReference type="SMART" id="SM00181">
    <property type="entry name" value="EGF"/>
    <property type="match status" value="6"/>
</dbReference>
<dbReference type="SUPFAM" id="SSF57196">
    <property type="entry name" value="EGF/Laminin"/>
    <property type="match status" value="6"/>
</dbReference>
<dbReference type="PROSITE" id="PS00022">
    <property type="entry name" value="EGF_1"/>
    <property type="match status" value="5"/>
</dbReference>
<dbReference type="PROSITE" id="PS01186">
    <property type="entry name" value="EGF_2"/>
    <property type="match status" value="5"/>
</dbReference>
<dbReference type="PROSITE" id="PS00243">
    <property type="entry name" value="I_EGF_1"/>
    <property type="match status" value="10"/>
</dbReference>
<dbReference type="PROSITE" id="PS52047">
    <property type="entry name" value="I_EGF_2"/>
    <property type="match status" value="10"/>
</dbReference>
<proteinExistence type="evidence at protein level"/>
<accession>O95965</accession>
<accession>A8K5M5</accession>
<accession>B3KTP1</accession>
<accession>B4DQ02</accession>
<accession>Q8N172</accession>
<accession>Q9NPR0</accession>
<evidence type="ECO:0000255" key="1"/>
<evidence type="ECO:0000255" key="2">
    <source>
        <dbReference type="PROSITE-ProRule" id="PRU01392"/>
    </source>
</evidence>
<evidence type="ECO:0000269" key="3">
    <source>
    </source>
</evidence>
<evidence type="ECO:0000303" key="4">
    <source>
    </source>
</evidence>
<evidence type="ECO:0000305" key="5"/>
<gene>
    <name type="primary">ITGBL1</name>
    <name type="synonym">OSCP</name>
    <name type="synonym">TIED</name>
</gene>
<protein>
    <recommendedName>
        <fullName>Integrin beta-like protein 1</fullName>
    </recommendedName>
    <alternativeName>
        <fullName>Osteoblast-specific cysteine-rich protein</fullName>
    </alternativeName>
    <alternativeName>
        <fullName>Ten integrin EGF-like repeat domain-containing protein</fullName>
    </alternativeName>
</protein>
<keyword id="KW-0025">Alternative splicing</keyword>
<keyword id="KW-1015">Disulfide bond</keyword>
<keyword id="KW-0245">EGF-like domain</keyword>
<keyword id="KW-0325">Glycoprotein</keyword>
<keyword id="KW-1267">Proteomics identification</keyword>
<keyword id="KW-1185">Reference proteome</keyword>
<keyword id="KW-0677">Repeat</keyword>
<keyword id="KW-0964">Secreted</keyword>
<keyword id="KW-0732">Signal</keyword>
<organism>
    <name type="scientific">Homo sapiens</name>
    <name type="common">Human</name>
    <dbReference type="NCBI Taxonomy" id="9606"/>
    <lineage>
        <taxon>Eukaryota</taxon>
        <taxon>Metazoa</taxon>
        <taxon>Chordata</taxon>
        <taxon>Craniata</taxon>
        <taxon>Vertebrata</taxon>
        <taxon>Euteleostomi</taxon>
        <taxon>Mammalia</taxon>
        <taxon>Eutheria</taxon>
        <taxon>Euarchontoglires</taxon>
        <taxon>Primates</taxon>
        <taxon>Haplorrhini</taxon>
        <taxon>Catarrhini</taxon>
        <taxon>Hominidae</taxon>
        <taxon>Homo</taxon>
    </lineage>
</organism>